<comment type="subunit">
    <text evidence="1">Component of the super elongation complex (SEC), at least composed of EAF1, EAF2, CDK9, MLLT3/AF9, AFF (AFF1 or AFF4), the P-TEFb complex and ELL (ELL, ELL2 or ELL3).</text>
</comment>
<comment type="subcellular location">
    <subcellularLocation>
        <location evidence="4">Nucleus</location>
    </subcellularLocation>
</comment>
<comment type="similarity">
    <text evidence="4">Belongs to the AF4 family.</text>
</comment>
<protein>
    <recommendedName>
        <fullName>AF4/FMR2 family member 1</fullName>
    </recommendedName>
    <alternativeName>
        <fullName>Proto-oncogene AF4</fullName>
        <shortName>Protein AF-4</shortName>
    </alternativeName>
</protein>
<organism>
    <name type="scientific">Mus musculus</name>
    <name type="common">Mouse</name>
    <dbReference type="NCBI Taxonomy" id="10090"/>
    <lineage>
        <taxon>Eukaryota</taxon>
        <taxon>Metazoa</taxon>
        <taxon>Chordata</taxon>
        <taxon>Craniata</taxon>
        <taxon>Vertebrata</taxon>
        <taxon>Euteleostomi</taxon>
        <taxon>Mammalia</taxon>
        <taxon>Eutheria</taxon>
        <taxon>Euarchontoglires</taxon>
        <taxon>Glires</taxon>
        <taxon>Rodentia</taxon>
        <taxon>Myomorpha</taxon>
        <taxon>Muroidea</taxon>
        <taxon>Muridae</taxon>
        <taxon>Murinae</taxon>
        <taxon>Mus</taxon>
        <taxon>Mus</taxon>
    </lineage>
</organism>
<evidence type="ECO:0000250" key="1"/>
<evidence type="ECO:0000250" key="2">
    <source>
        <dbReference type="UniProtKB" id="P51825"/>
    </source>
</evidence>
<evidence type="ECO:0000256" key="3">
    <source>
        <dbReference type="SAM" id="MobiDB-lite"/>
    </source>
</evidence>
<evidence type="ECO:0000305" key="4"/>
<evidence type="ECO:0007744" key="5">
    <source>
    </source>
</evidence>
<proteinExistence type="evidence at protein level"/>
<keyword id="KW-0007">Acetylation</keyword>
<keyword id="KW-0539">Nucleus</keyword>
<keyword id="KW-0597">Phosphoprotein</keyword>
<keyword id="KW-0656">Proto-oncogene</keyword>
<keyword id="KW-1185">Reference proteome</keyword>
<accession>O88573</accession>
<gene>
    <name type="primary">Aff1</name>
    <name type="synonym">Mllt2</name>
    <name type="synonym">Mllt2h</name>
</gene>
<reference key="1">
    <citation type="journal article" date="1998" name="Mamm. Genome">
        <title>cDNA cloning, expression and chromosomal localization of the murine AF-4 gene involved in human leukemia.</title>
        <authorList>
            <person name="Isnard P."/>
            <person name="Depetris D."/>
            <person name="Mattei M.-G."/>
            <person name="Ferrier P."/>
            <person name="Djabali M."/>
        </authorList>
    </citation>
    <scope>NUCLEOTIDE SEQUENCE [MRNA]</scope>
    <source>
        <tissue>Thymus</tissue>
    </source>
</reference>
<reference key="2">
    <citation type="journal article" date="2009" name="PLoS Biol.">
        <title>Lineage-specific biology revealed by a finished genome assembly of the mouse.</title>
        <authorList>
            <person name="Church D.M."/>
            <person name="Goodstadt L."/>
            <person name="Hillier L.W."/>
            <person name="Zody M.C."/>
            <person name="Goldstein S."/>
            <person name="She X."/>
            <person name="Bult C.J."/>
            <person name="Agarwala R."/>
            <person name="Cherry J.L."/>
            <person name="DiCuccio M."/>
            <person name="Hlavina W."/>
            <person name="Kapustin Y."/>
            <person name="Meric P."/>
            <person name="Maglott D."/>
            <person name="Birtle Z."/>
            <person name="Marques A.C."/>
            <person name="Graves T."/>
            <person name="Zhou S."/>
            <person name="Teague B."/>
            <person name="Potamousis K."/>
            <person name="Churas C."/>
            <person name="Place M."/>
            <person name="Herschleb J."/>
            <person name="Runnheim R."/>
            <person name="Forrest D."/>
            <person name="Amos-Landgraf J."/>
            <person name="Schwartz D.C."/>
            <person name="Cheng Z."/>
            <person name="Lindblad-Toh K."/>
            <person name="Eichler E.E."/>
            <person name="Ponting C.P."/>
        </authorList>
    </citation>
    <scope>NUCLEOTIDE SEQUENCE [LARGE SCALE GENOMIC DNA]</scope>
    <source>
        <strain>C57BL/6J</strain>
    </source>
</reference>
<reference key="3">
    <citation type="journal article" date="2010" name="Cell">
        <title>A tissue-specific atlas of mouse protein phosphorylation and expression.</title>
        <authorList>
            <person name="Huttlin E.L."/>
            <person name="Jedrychowski M.P."/>
            <person name="Elias J.E."/>
            <person name="Goswami T."/>
            <person name="Rad R."/>
            <person name="Beausoleil S.A."/>
            <person name="Villen J."/>
            <person name="Haas W."/>
            <person name="Sowa M.E."/>
            <person name="Gygi S.P."/>
        </authorList>
    </citation>
    <scope>PHOSPHORYLATION [LARGE SCALE ANALYSIS] AT SER-183; SER-191; SER-197; SER-755 AND SER-760</scope>
    <scope>IDENTIFICATION BY MASS SPECTROMETRY [LARGE SCALE ANALYSIS]</scope>
    <source>
        <tissue>Brown adipose tissue</tissue>
        <tissue>Kidney</tissue>
        <tissue>Liver</tissue>
        <tissue>Lung</tissue>
        <tissue>Pancreas</tissue>
        <tissue>Spleen</tissue>
        <tissue>Testis</tissue>
    </source>
</reference>
<dbReference type="EMBL" id="AF074266">
    <property type="protein sequence ID" value="AAD08668.1"/>
    <property type="molecule type" value="mRNA"/>
</dbReference>
<dbReference type="EMBL" id="AL713989">
    <property type="status" value="NOT_ANNOTATED_CDS"/>
    <property type="molecule type" value="Genomic_DNA"/>
</dbReference>
<dbReference type="EMBL" id="AL731554">
    <property type="status" value="NOT_ANNOTATED_CDS"/>
    <property type="molecule type" value="Genomic_DNA"/>
</dbReference>
<dbReference type="PIR" id="T42625">
    <property type="entry name" value="T42625"/>
</dbReference>
<dbReference type="SMR" id="O88573"/>
<dbReference type="FunCoup" id="O88573">
    <property type="interactions" value="1461"/>
</dbReference>
<dbReference type="IntAct" id="O88573">
    <property type="interactions" value="2"/>
</dbReference>
<dbReference type="MINT" id="O88573"/>
<dbReference type="STRING" id="10090.ENSMUSP00000031256"/>
<dbReference type="GlyGen" id="O88573">
    <property type="glycosylation" value="2 sites"/>
</dbReference>
<dbReference type="iPTMnet" id="O88573"/>
<dbReference type="PhosphoSitePlus" id="O88573"/>
<dbReference type="jPOST" id="O88573"/>
<dbReference type="PaxDb" id="10090-ENSMUSP00000059744"/>
<dbReference type="PeptideAtlas" id="O88573"/>
<dbReference type="ProteomicsDB" id="285768"/>
<dbReference type="AGR" id="MGI:1100819"/>
<dbReference type="MGI" id="MGI:1100819">
    <property type="gene designation" value="Aff1"/>
</dbReference>
<dbReference type="eggNOG" id="ENOG502QR32">
    <property type="taxonomic scope" value="Eukaryota"/>
</dbReference>
<dbReference type="InParanoid" id="O88573"/>
<dbReference type="ChiTaRS" id="Aff1">
    <property type="organism name" value="mouse"/>
</dbReference>
<dbReference type="PRO" id="PR:O88573"/>
<dbReference type="Proteomes" id="UP000000589">
    <property type="component" value="Unplaced"/>
</dbReference>
<dbReference type="RNAct" id="O88573">
    <property type="molecule type" value="protein"/>
</dbReference>
<dbReference type="GO" id="GO:0005634">
    <property type="term" value="C:nucleus"/>
    <property type="evidence" value="ECO:0000314"/>
    <property type="project" value="MGI"/>
</dbReference>
<dbReference type="GO" id="GO:0008023">
    <property type="term" value="C:transcription elongation factor complex"/>
    <property type="evidence" value="ECO:0000250"/>
    <property type="project" value="UniProtKB"/>
</dbReference>
<dbReference type="GO" id="GO:0003700">
    <property type="term" value="F:DNA-binding transcription factor activity"/>
    <property type="evidence" value="ECO:0000304"/>
    <property type="project" value="MGI"/>
</dbReference>
<dbReference type="GO" id="GO:0006351">
    <property type="term" value="P:DNA-templated transcription"/>
    <property type="evidence" value="ECO:0000304"/>
    <property type="project" value="MGI"/>
</dbReference>
<dbReference type="GO" id="GO:0045893">
    <property type="term" value="P:positive regulation of DNA-templated transcription"/>
    <property type="evidence" value="ECO:0000314"/>
    <property type="project" value="MGI"/>
</dbReference>
<dbReference type="Gene3D" id="6.10.250.2670">
    <property type="match status" value="1"/>
</dbReference>
<dbReference type="InterPro" id="IPR007797">
    <property type="entry name" value="AF4/FMR2"/>
</dbReference>
<dbReference type="InterPro" id="IPR043640">
    <property type="entry name" value="AF4/FMR2_CHD"/>
</dbReference>
<dbReference type="InterPro" id="IPR043639">
    <property type="entry name" value="AF4_int"/>
</dbReference>
<dbReference type="PANTHER" id="PTHR10528">
    <property type="entry name" value="AF4/FMR2 FAMILY MEMBER"/>
    <property type="match status" value="1"/>
</dbReference>
<dbReference type="PANTHER" id="PTHR10528:SF6">
    <property type="entry name" value="AF4_FMR2 FAMILY MEMBER 1"/>
    <property type="match status" value="1"/>
</dbReference>
<dbReference type="Pfam" id="PF05110">
    <property type="entry name" value="AF-4"/>
    <property type="match status" value="1"/>
</dbReference>
<dbReference type="Pfam" id="PF18875">
    <property type="entry name" value="AF4_int"/>
    <property type="match status" value="1"/>
</dbReference>
<dbReference type="Pfam" id="PF18876">
    <property type="entry name" value="AFF4_CHD"/>
    <property type="match status" value="1"/>
</dbReference>
<feature type="chain" id="PRO_0000215911" description="AF4/FMR2 family member 1">
    <location>
        <begin position="1"/>
        <end position="1216"/>
    </location>
</feature>
<feature type="region of interest" description="Disordered" evidence="3">
    <location>
        <begin position="1"/>
        <end position="52"/>
    </location>
</feature>
<feature type="region of interest" description="Disordered" evidence="3">
    <location>
        <begin position="68"/>
        <end position="104"/>
    </location>
</feature>
<feature type="region of interest" description="Disordered" evidence="3">
    <location>
        <begin position="116"/>
        <end position="139"/>
    </location>
</feature>
<feature type="region of interest" description="Disordered" evidence="3">
    <location>
        <begin position="152"/>
        <end position="217"/>
    </location>
</feature>
<feature type="region of interest" description="Disordered" evidence="3">
    <location>
        <begin position="244"/>
        <end position="275"/>
    </location>
</feature>
<feature type="region of interest" description="Disordered" evidence="3">
    <location>
        <begin position="352"/>
        <end position="728"/>
    </location>
</feature>
<feature type="region of interest" description="Disordered" evidence="3">
    <location>
        <begin position="777"/>
        <end position="969"/>
    </location>
</feature>
<feature type="region of interest" description="Disordered" evidence="3">
    <location>
        <begin position="1094"/>
        <end position="1125"/>
    </location>
</feature>
<feature type="compositionally biased region" description="Basic and acidic residues" evidence="3">
    <location>
        <begin position="9"/>
        <end position="35"/>
    </location>
</feature>
<feature type="compositionally biased region" description="Basic and acidic residues" evidence="3">
    <location>
        <begin position="78"/>
        <end position="99"/>
    </location>
</feature>
<feature type="compositionally biased region" description="Basic and acidic residues" evidence="3">
    <location>
        <begin position="166"/>
        <end position="182"/>
    </location>
</feature>
<feature type="compositionally biased region" description="Low complexity" evidence="3">
    <location>
        <begin position="207"/>
        <end position="217"/>
    </location>
</feature>
<feature type="compositionally biased region" description="Pro residues" evidence="3">
    <location>
        <begin position="252"/>
        <end position="266"/>
    </location>
</feature>
<feature type="compositionally biased region" description="Polar residues" evidence="3">
    <location>
        <begin position="383"/>
        <end position="406"/>
    </location>
</feature>
<feature type="compositionally biased region" description="Acidic residues" evidence="3">
    <location>
        <begin position="408"/>
        <end position="424"/>
    </location>
</feature>
<feature type="compositionally biased region" description="Pro residues" evidence="3">
    <location>
        <begin position="429"/>
        <end position="438"/>
    </location>
</feature>
<feature type="compositionally biased region" description="Acidic residues" evidence="3">
    <location>
        <begin position="457"/>
        <end position="484"/>
    </location>
</feature>
<feature type="compositionally biased region" description="Low complexity" evidence="3">
    <location>
        <begin position="710"/>
        <end position="728"/>
    </location>
</feature>
<feature type="compositionally biased region" description="Basic and acidic residues" evidence="3">
    <location>
        <begin position="789"/>
        <end position="808"/>
    </location>
</feature>
<feature type="compositionally biased region" description="Low complexity" evidence="3">
    <location>
        <begin position="824"/>
        <end position="846"/>
    </location>
</feature>
<feature type="compositionally biased region" description="Low complexity" evidence="3">
    <location>
        <begin position="867"/>
        <end position="886"/>
    </location>
</feature>
<feature type="compositionally biased region" description="Low complexity" evidence="3">
    <location>
        <begin position="902"/>
        <end position="915"/>
    </location>
</feature>
<feature type="compositionally biased region" description="Low complexity" evidence="3">
    <location>
        <begin position="1115"/>
        <end position="1125"/>
    </location>
</feature>
<feature type="modified residue" description="Phosphoserine" evidence="5">
    <location>
        <position position="183"/>
    </location>
</feature>
<feature type="modified residue" description="Phosphoserine" evidence="5">
    <location>
        <position position="191"/>
    </location>
</feature>
<feature type="modified residue" description="Phosphoserine" evidence="5">
    <location>
        <position position="197"/>
    </location>
</feature>
<feature type="modified residue" description="N6-acetyllysine" evidence="2">
    <location>
        <position position="682"/>
    </location>
</feature>
<feature type="modified residue" description="Phosphoserine" evidence="5">
    <location>
        <position position="755"/>
    </location>
</feature>
<feature type="modified residue" description="Phosphoserine" evidence="5">
    <location>
        <position position="760"/>
    </location>
</feature>
<feature type="sequence conflict" description="In Ref. 1; AAD08668." evidence="4" ref="1">
    <original>P</original>
    <variation>L</variation>
    <location>
        <position position="378"/>
    </location>
</feature>
<feature type="sequence conflict" description="In Ref. 1; AAD08668." evidence="4" ref="1">
    <original>G</original>
    <variation>R</variation>
    <location>
        <position position="619"/>
    </location>
</feature>
<feature type="sequence conflict" description="In Ref. 1; AAD08668." evidence="4" ref="1">
    <original>K</original>
    <variation>R</variation>
    <location>
        <position position="820"/>
    </location>
</feature>
<feature type="sequence conflict" description="In Ref. 1; AAD08668." evidence="4" ref="1">
    <original>R</original>
    <variation>KT</variation>
    <location>
        <position position="838"/>
    </location>
</feature>
<sequence length="1216" mass="131558">MAAHSSLYNEDRNLLRIREKERRNQEAHQEKEAFPEKAPLFPEPYKTAKGDELSSRIQTMLGDYEEMKEFLSSKSHPHRLDGSEDRPGKPRYPLGHDRGNGAASSSLRTHVYHQPIHTSAPGSRPVGNISHSPKMAQPRMEPSLHTKIYDGPRLTQDHLSQGHCSRKCDRRAEGDSAPERKLSPLISSLPSPVPPLSPVHSRLQGTSKAHSSGVSSKSCCVAKSSKDLVAKAQDKETPHDGLVAVTSLGSAPPQPPCQTFPPPPLPSKSAAMQQKPTAYVRPMDGQDQAPSESPELKLPLEDYGQQSFEKPDLKVPAKAKLTRLRMPSQSVEQPYSNEVHCVEEILKEMTHSWPPPLTAIHTPSTAEPSRFPFPTKDPLHVSPATQSQKQYDTPSKTHPNPQQGTSMLEDDLQLSDSEDSDTEQATEKPPSPPAPPSAPQTLPEPVASAHSSSGESESSESDSSSDSESESSSSDSEEEEENEPLETRAPEPEPPTTNKWQLDNWLTKVNQPSVPLDGRGSTESPQWRQESKGVAEGSSDQQHPDSKDPLPKSSSKTLRGPSEGPSLGRGAVRNPPLNRNPHLGKPWAANNPGNPPRLRPGRAQASSQAESEVGPLPYGSKEQTSKDRPKVKTKGRPRAVGSREPKPEVPAPTPQAAVPRPKPPVPTPSEKRKHKSSTAPSKAPSAPQPPKDSAGDRNPEHSALVSLTQSQGPSHSSRGSSGSVRTSGCRQAVIAQGDGCKDKLLLPLRDTKLLSPLRDSPPPTSLVVKITLDLLTRIPQPLGKGSRPRKAEDKQLSAGKKQDSETKSCDSSSRVTKKRKVTQKKSTVTRDTNWISRRASSSSSHTESSRTKAPRSSSENSRKEMLPPASASSVSSSSSSQKPSRPAQKRPRPDEDTCSQEPPRSASSTKSSSTDPPAPKHRKVQARGSEHKGSSGDAANAANPFPVPSLPNGNAKPGKPQVKSDRQQADFHMKEAKKLKCKAETMVDKAGKAFKYLEAVLSFIECGMASESESSAKSAYAVYSETIDLIRYVMSLKCFSDNTMPAQEKIFAVLCLRCQSLLNMAMFRCKKDTVMKYSRTLSEHFKSTSKVAQAPSPCTARSTGVPSPLSPMPSPASSVGSQSSAGSSMGSVGVTATVSTPVSIQNMTSSYVTITSHVLTAFSLWEQAEALTRKNKEFFAQLSTKVRVLALNSSLVDLVHYTRQGLQRLKQSPKGP</sequence>
<name>AFF1_MOUSE</name>